<name>WOX6_ARATH</name>
<proteinExistence type="evidence at transcript level"/>
<gene>
    <name type="primary">WOX6</name>
    <name type="synonym">PFS2</name>
    <name type="ordered locus">At2g01500</name>
    <name type="ORF">F2I9.12</name>
</gene>
<reference key="1">
    <citation type="journal article" date="2004" name="Development">
        <title>Expression dynamics of WOX genes mark cell fate decisions during early embryonic patterning in Arabidopsis thaliana.</title>
        <authorList>
            <person name="Haecker A."/>
            <person name="Gross-Hardt R."/>
            <person name="Geiges B."/>
            <person name="Sarkar A."/>
            <person name="Breuninger H."/>
            <person name="Herrmann M."/>
            <person name="Laux T."/>
        </authorList>
    </citation>
    <scope>NUCLEOTIDE SEQUENCE [MRNA]</scope>
    <source>
        <strain>cv. Landsberg erecta</strain>
    </source>
</reference>
<reference key="2">
    <citation type="journal article" date="2005" name="Development">
        <title>The PRETTY FEW SEEDS2 gene encodes an Arabidopsis homeodomain protein that regulates ovule development.</title>
        <authorList>
            <person name="Park S.O."/>
            <person name="Zheng Z."/>
            <person name="Oppenheimer D.G."/>
            <person name="Hauser B.A."/>
        </authorList>
    </citation>
    <scope>NUCLEOTIDE SEQUENCE [MRNA]</scope>
    <scope>FUNCTION</scope>
    <scope>TISSUE SPECIFICITY</scope>
    <scope>DEVELOPMENTAL STAGE</scope>
</reference>
<reference key="3">
    <citation type="journal article" date="1999" name="Nature">
        <title>Sequence and analysis of chromosome 2 of the plant Arabidopsis thaliana.</title>
        <authorList>
            <person name="Lin X."/>
            <person name="Kaul S."/>
            <person name="Rounsley S.D."/>
            <person name="Shea T.P."/>
            <person name="Benito M.-I."/>
            <person name="Town C.D."/>
            <person name="Fujii C.Y."/>
            <person name="Mason T.M."/>
            <person name="Bowman C.L."/>
            <person name="Barnstead M.E."/>
            <person name="Feldblyum T.V."/>
            <person name="Buell C.R."/>
            <person name="Ketchum K.A."/>
            <person name="Lee J.J."/>
            <person name="Ronning C.M."/>
            <person name="Koo H.L."/>
            <person name="Moffat K.S."/>
            <person name="Cronin L.A."/>
            <person name="Shen M."/>
            <person name="Pai G."/>
            <person name="Van Aken S."/>
            <person name="Umayam L."/>
            <person name="Tallon L.J."/>
            <person name="Gill J.E."/>
            <person name="Adams M.D."/>
            <person name="Carrera A.J."/>
            <person name="Creasy T.H."/>
            <person name="Goodman H.M."/>
            <person name="Somerville C.R."/>
            <person name="Copenhaver G.P."/>
            <person name="Preuss D."/>
            <person name="Nierman W.C."/>
            <person name="White O."/>
            <person name="Eisen J.A."/>
            <person name="Salzberg S.L."/>
            <person name="Fraser C.M."/>
            <person name="Venter J.C."/>
        </authorList>
    </citation>
    <scope>NUCLEOTIDE SEQUENCE [LARGE SCALE GENOMIC DNA]</scope>
    <source>
        <strain>cv. Columbia</strain>
    </source>
</reference>
<reference key="4">
    <citation type="journal article" date="2017" name="Plant J.">
        <title>Araport11: a complete reannotation of the Arabidopsis thaliana reference genome.</title>
        <authorList>
            <person name="Cheng C.Y."/>
            <person name="Krishnakumar V."/>
            <person name="Chan A.P."/>
            <person name="Thibaud-Nissen F."/>
            <person name="Schobel S."/>
            <person name="Town C.D."/>
        </authorList>
    </citation>
    <scope>GENOME REANNOTATION</scope>
    <source>
        <strain>cv. Columbia</strain>
    </source>
</reference>
<reference key="5">
    <citation type="submission" date="2002-03" db="EMBL/GenBank/DDBJ databases">
        <title>Full-length cDNA from Arabidopsis thaliana.</title>
        <authorList>
            <person name="Brover V.V."/>
            <person name="Troukhan M.E."/>
            <person name="Alexandrov N.A."/>
            <person name="Lu Y.-P."/>
            <person name="Flavell R.B."/>
            <person name="Feldmann K.A."/>
        </authorList>
    </citation>
    <scope>NUCLEOTIDE SEQUENCE [LARGE SCALE MRNA]</scope>
</reference>
<sequence>MGYISNNNLINYLPLSTTQPPLLLTHCDINGNDHHQLITASSGEHDIDERKNNIPAAATLRWNPTPEQITTLEELYRSGTRTPTTEQIQQIASKLRKYGRIEGKNVFYWFQNHKARERLKRRRREGGAIIKPHKDVKDSSSGGHRVDQTKLCPSFPHTNRPQPQHELDPASYNKDNNANNEDHGTTEESDQRASEVGKYATWRNLVTWSITQQPEEINIDENVNGEEEETRDNRTLNLFPVREYQEKTGRLIEKTKACNYCYYYEFMPLKN</sequence>
<organism>
    <name type="scientific">Arabidopsis thaliana</name>
    <name type="common">Mouse-ear cress</name>
    <dbReference type="NCBI Taxonomy" id="3702"/>
    <lineage>
        <taxon>Eukaryota</taxon>
        <taxon>Viridiplantae</taxon>
        <taxon>Streptophyta</taxon>
        <taxon>Embryophyta</taxon>
        <taxon>Tracheophyta</taxon>
        <taxon>Spermatophyta</taxon>
        <taxon>Magnoliopsida</taxon>
        <taxon>eudicotyledons</taxon>
        <taxon>Gunneridae</taxon>
        <taxon>Pentapetalae</taxon>
        <taxon>rosids</taxon>
        <taxon>malvids</taxon>
        <taxon>Brassicales</taxon>
        <taxon>Brassicaceae</taxon>
        <taxon>Camelineae</taxon>
        <taxon>Arabidopsis</taxon>
    </lineage>
</organism>
<dbReference type="EMBL" id="AY251399">
    <property type="protein sequence ID" value="AAP37137.2"/>
    <property type="molecule type" value="mRNA"/>
</dbReference>
<dbReference type="EMBL" id="AY885222">
    <property type="protein sequence ID" value="AAW78002.1"/>
    <property type="molecule type" value="mRNA"/>
</dbReference>
<dbReference type="EMBL" id="AC005560">
    <property type="protein sequence ID" value="AAC67326.2"/>
    <property type="molecule type" value="Genomic_DNA"/>
</dbReference>
<dbReference type="EMBL" id="CP002685">
    <property type="protein sequence ID" value="AEC05461.1"/>
    <property type="molecule type" value="Genomic_DNA"/>
</dbReference>
<dbReference type="EMBL" id="AY085832">
    <property type="protein sequence ID" value="AAM63047.1"/>
    <property type="molecule type" value="mRNA"/>
</dbReference>
<dbReference type="PIR" id="E84425">
    <property type="entry name" value="E84425"/>
</dbReference>
<dbReference type="RefSeq" id="NP_565263.1">
    <property type="nucleotide sequence ID" value="NM_126211.2"/>
</dbReference>
<dbReference type="SMR" id="Q9ZVF5"/>
<dbReference type="FunCoup" id="Q9ZVF5">
    <property type="interactions" value="7"/>
</dbReference>
<dbReference type="STRING" id="3702.Q9ZVF5"/>
<dbReference type="iPTMnet" id="Q9ZVF5"/>
<dbReference type="PaxDb" id="3702-AT2G01500.1"/>
<dbReference type="EnsemblPlants" id="AT2G01500.1">
    <property type="protein sequence ID" value="AT2G01500.1"/>
    <property type="gene ID" value="AT2G01500"/>
</dbReference>
<dbReference type="GeneID" id="814678"/>
<dbReference type="Gramene" id="AT2G01500.1">
    <property type="protein sequence ID" value="AT2G01500.1"/>
    <property type="gene ID" value="AT2G01500"/>
</dbReference>
<dbReference type="KEGG" id="ath:AT2G01500"/>
<dbReference type="Araport" id="AT2G01500"/>
<dbReference type="TAIR" id="AT2G01500">
    <property type="gene designation" value="PFS2"/>
</dbReference>
<dbReference type="eggNOG" id="ENOG502QVAV">
    <property type="taxonomic scope" value="Eukaryota"/>
</dbReference>
<dbReference type="HOGENOM" id="CLU_1020653_0_0_1"/>
<dbReference type="InParanoid" id="Q9ZVF5"/>
<dbReference type="OMA" id="INNEDHC"/>
<dbReference type="OrthoDB" id="1932526at2759"/>
<dbReference type="PhylomeDB" id="Q9ZVF5"/>
<dbReference type="PRO" id="PR:Q9ZVF5"/>
<dbReference type="Proteomes" id="UP000006548">
    <property type="component" value="Chromosome 2"/>
</dbReference>
<dbReference type="ExpressionAtlas" id="Q9ZVF5">
    <property type="expression patterns" value="baseline and differential"/>
</dbReference>
<dbReference type="GO" id="GO:0005634">
    <property type="term" value="C:nucleus"/>
    <property type="evidence" value="ECO:0000314"/>
    <property type="project" value="TAIR"/>
</dbReference>
<dbReference type="GO" id="GO:0048353">
    <property type="term" value="C:primary endosperm nucleus"/>
    <property type="evidence" value="ECO:0000314"/>
    <property type="project" value="TAIR"/>
</dbReference>
<dbReference type="GO" id="GO:0003677">
    <property type="term" value="F:DNA binding"/>
    <property type="evidence" value="ECO:0007669"/>
    <property type="project" value="UniProtKB-KW"/>
</dbReference>
<dbReference type="GO" id="GO:0003700">
    <property type="term" value="F:DNA-binding transcription factor activity"/>
    <property type="evidence" value="ECO:0000250"/>
    <property type="project" value="TAIR"/>
</dbReference>
<dbReference type="GO" id="GO:0030154">
    <property type="term" value="P:cell differentiation"/>
    <property type="evidence" value="ECO:0007669"/>
    <property type="project" value="UniProtKB-KW"/>
</dbReference>
<dbReference type="GO" id="GO:0051301">
    <property type="term" value="P:cell division"/>
    <property type="evidence" value="ECO:0000315"/>
    <property type="project" value="TAIR"/>
</dbReference>
<dbReference type="GO" id="GO:0048314">
    <property type="term" value="P:embryo sac morphogenesis"/>
    <property type="evidence" value="ECO:0000315"/>
    <property type="project" value="TAIR"/>
</dbReference>
<dbReference type="GO" id="GO:0048437">
    <property type="term" value="P:floral organ development"/>
    <property type="evidence" value="ECO:0000315"/>
    <property type="project" value="TAIR"/>
</dbReference>
<dbReference type="GO" id="GO:0048366">
    <property type="term" value="P:leaf development"/>
    <property type="evidence" value="ECO:0000315"/>
    <property type="project" value="TAIR"/>
</dbReference>
<dbReference type="GO" id="GO:0009965">
    <property type="term" value="P:leaf morphogenesis"/>
    <property type="evidence" value="ECO:0000315"/>
    <property type="project" value="TAIR"/>
</dbReference>
<dbReference type="GO" id="GO:0048446">
    <property type="term" value="P:petal morphogenesis"/>
    <property type="evidence" value="ECO:0000315"/>
    <property type="project" value="TAIR"/>
</dbReference>
<dbReference type="GO" id="GO:0048482">
    <property type="term" value="P:plant ovule morphogenesis"/>
    <property type="evidence" value="ECO:0000315"/>
    <property type="project" value="TAIR"/>
</dbReference>
<dbReference type="GO" id="GO:0051510">
    <property type="term" value="P:regulation of unidimensional cell growth"/>
    <property type="evidence" value="ECO:0000315"/>
    <property type="project" value="TAIR"/>
</dbReference>
<dbReference type="CDD" id="cd00086">
    <property type="entry name" value="homeodomain"/>
    <property type="match status" value="1"/>
</dbReference>
<dbReference type="FunFam" id="1.10.10.60:FF:000146">
    <property type="entry name" value="WUSCHEL-related homeobox 4"/>
    <property type="match status" value="1"/>
</dbReference>
<dbReference type="Gene3D" id="1.10.10.60">
    <property type="entry name" value="Homeodomain-like"/>
    <property type="match status" value="1"/>
</dbReference>
<dbReference type="InterPro" id="IPR001356">
    <property type="entry name" value="HD"/>
</dbReference>
<dbReference type="InterPro" id="IPR009057">
    <property type="entry name" value="Homeodomain-like_sf"/>
</dbReference>
<dbReference type="InterPro" id="IPR044555">
    <property type="entry name" value="WUSCHEL-like"/>
</dbReference>
<dbReference type="PANTHER" id="PTHR45940">
    <property type="entry name" value="WUSCHEL-RELATED HOMEOBOX 1-RELATED"/>
    <property type="match status" value="1"/>
</dbReference>
<dbReference type="PANTHER" id="PTHR45940:SF19">
    <property type="entry name" value="WUSCHEL-RELATED HOMEOBOX 6"/>
    <property type="match status" value="1"/>
</dbReference>
<dbReference type="Pfam" id="PF00046">
    <property type="entry name" value="Homeodomain"/>
    <property type="match status" value="1"/>
</dbReference>
<dbReference type="SMART" id="SM00389">
    <property type="entry name" value="HOX"/>
    <property type="match status" value="1"/>
</dbReference>
<dbReference type="SUPFAM" id="SSF46689">
    <property type="entry name" value="Homeodomain-like"/>
    <property type="match status" value="1"/>
</dbReference>
<dbReference type="PROSITE" id="PS50071">
    <property type="entry name" value="HOMEOBOX_2"/>
    <property type="match status" value="1"/>
</dbReference>
<feature type="chain" id="PRO_0000049373" description="WUSCHEL-related homeobox 6">
    <location>
        <begin position="1"/>
        <end position="271"/>
    </location>
</feature>
<feature type="DNA-binding region" description="Homeobox; WUS-type" evidence="1">
    <location>
        <begin position="57"/>
        <end position="121"/>
    </location>
</feature>
<feature type="region of interest" description="Disordered" evidence="2">
    <location>
        <begin position="118"/>
        <end position="195"/>
    </location>
</feature>
<feature type="compositionally biased region" description="Basic and acidic residues" evidence="2">
    <location>
        <begin position="132"/>
        <end position="148"/>
    </location>
</feature>
<feature type="compositionally biased region" description="Basic and acidic residues" evidence="2">
    <location>
        <begin position="180"/>
        <end position="195"/>
    </location>
</feature>
<evidence type="ECO:0000255" key="1">
    <source>
        <dbReference type="PROSITE-ProRule" id="PRU00108"/>
    </source>
</evidence>
<evidence type="ECO:0000256" key="2">
    <source>
        <dbReference type="SAM" id="MobiDB-lite"/>
    </source>
</evidence>
<evidence type="ECO:0000269" key="3">
    <source>
    </source>
</evidence>
<evidence type="ECO:0000305" key="4"/>
<keyword id="KW-0217">Developmental protein</keyword>
<keyword id="KW-0221">Differentiation</keyword>
<keyword id="KW-0238">DNA-binding</keyword>
<keyword id="KW-0371">Homeobox</keyword>
<keyword id="KW-0539">Nucleus</keyword>
<keyword id="KW-0896">Oogenesis</keyword>
<keyword id="KW-1185">Reference proteome</keyword>
<keyword id="KW-0804">Transcription</keyword>
<keyword id="KW-0805">Transcription regulation</keyword>
<protein>
    <recommendedName>
        <fullName>WUSCHEL-related homeobox 6</fullName>
    </recommendedName>
    <alternativeName>
        <fullName>Protein PRETTY FEW SEEDS 2</fullName>
    </alternativeName>
</protein>
<accession>Q9ZVF5</accession>
<comment type="function">
    <text evidence="3">Transcription factor that plays a central role in ovule patterning by regulating cell proliferation of the maternal integuments and differentiation of the maegaspore mother cell (MCC). Involved in AGAMOUS (AG) repression in leaves.</text>
</comment>
<comment type="subcellular location">
    <subcellularLocation>
        <location evidence="1">Nucleus</location>
    </subcellularLocation>
</comment>
<comment type="tissue specificity">
    <text evidence="3">Highly expressed in developing ovules. Present in developing primordia and differentiating organs but absent in mature organs.</text>
</comment>
<comment type="developmental stage">
    <text evidence="3">In developing seeds, it is expressed in the embryo, suspensor and endosperm nuclei, but absent in the integuments. In seedlings, it is expressed in the shoot apical meristem and leaf primordia, but not in expanded cotyledons or mature leaves. In reproductive structures, transcripts could be detected in floral apical meristems, floral primordia, stamens and pistils. Also expressed in the tapetum in anthers and in the gynoecium. Weakly expressed in petals, sepals and the walls of carpels.</text>
</comment>
<comment type="similarity">
    <text evidence="4">Belongs to the WUS homeobox family.</text>
</comment>